<proteinExistence type="inferred from homology"/>
<sequence length="504" mass="54651">MQTALVILDGWGLGDHDRRNAVQTASTPTFDRLIEKGANGTLDVSGRQVGLPAGQMGNSEVGHLNIGAGQVVKQAYTRVEDAIDNGSFQTNAAINAAFNHAVATNGRVHFMGLLSDGGVHSEQEHLHALIELAGDRNIDAITHVFTDGRDTNPHSSEQYLTTLEEVIHTHGTGDIATVSGRYYAMDRDKNWTRTRMSYDAIVNRTAEHTTSTALEAVSESYDRGDTDEFIEPTLIDNTPAVEDGDAVFVFNFRPDRVRQLVRMLADIDPAWSFETDPPTTELATMAQYDETFSLPVAFPPNEQHDTLGEVIATAGLTQLRIAESEKYAHVTYFLNGGREIAFEDERREIIKSPDVSTYDQQPSMSSNEVTDTAIEQINTTDPDVLILNYANPDMVGHTGDFTAAIEAIESVDTQLDRLLETIYAAGGHVIVTADHGNADNMGTAANPHTAHTTNPVPIVYTRPDGNGDGDTIRDGGSLCDIAPTVLELLSVEQPAAMTGSSLIE</sequence>
<name>GPMI_HALWD</name>
<feature type="chain" id="PRO_1000063975" description="2,3-bisphosphoglycerate-independent phosphoglycerate mutase">
    <location>
        <begin position="1"/>
        <end position="504"/>
    </location>
</feature>
<feature type="active site" description="Phosphoserine intermediate" evidence="1">
    <location>
        <position position="59"/>
    </location>
</feature>
<feature type="binding site" evidence="1">
    <location>
        <position position="9"/>
    </location>
    <ligand>
        <name>Mn(2+)</name>
        <dbReference type="ChEBI" id="CHEBI:29035"/>
        <label>2</label>
    </ligand>
</feature>
<feature type="binding site" evidence="1">
    <location>
        <position position="59"/>
    </location>
    <ligand>
        <name>Mn(2+)</name>
        <dbReference type="ChEBI" id="CHEBI:29035"/>
        <label>2</label>
    </ligand>
</feature>
<feature type="binding site" evidence="1">
    <location>
        <position position="120"/>
    </location>
    <ligand>
        <name>substrate</name>
    </ligand>
</feature>
<feature type="binding site" evidence="1">
    <location>
        <begin position="149"/>
        <end position="150"/>
    </location>
    <ligand>
        <name>substrate</name>
    </ligand>
</feature>
<feature type="binding site" evidence="1">
    <location>
        <position position="181"/>
    </location>
    <ligand>
        <name>substrate</name>
    </ligand>
</feature>
<feature type="binding site" evidence="1">
    <location>
        <position position="187"/>
    </location>
    <ligand>
        <name>substrate</name>
    </ligand>
</feature>
<feature type="binding site" evidence="1">
    <location>
        <begin position="253"/>
        <end position="256"/>
    </location>
    <ligand>
        <name>substrate</name>
    </ligand>
</feature>
<feature type="binding site" evidence="1">
    <location>
        <position position="326"/>
    </location>
    <ligand>
        <name>substrate</name>
    </ligand>
</feature>
<feature type="binding site" evidence="1">
    <location>
        <position position="393"/>
    </location>
    <ligand>
        <name>Mn(2+)</name>
        <dbReference type="ChEBI" id="CHEBI:29035"/>
        <label>1</label>
    </ligand>
</feature>
<feature type="binding site" evidence="1">
    <location>
        <position position="397"/>
    </location>
    <ligand>
        <name>Mn(2+)</name>
        <dbReference type="ChEBI" id="CHEBI:29035"/>
        <label>1</label>
    </ligand>
</feature>
<feature type="binding site" evidence="1">
    <location>
        <position position="434"/>
    </location>
    <ligand>
        <name>Mn(2+)</name>
        <dbReference type="ChEBI" id="CHEBI:29035"/>
        <label>2</label>
    </ligand>
</feature>
<feature type="binding site" evidence="1">
    <location>
        <position position="435"/>
    </location>
    <ligand>
        <name>Mn(2+)</name>
        <dbReference type="ChEBI" id="CHEBI:29035"/>
        <label>2</label>
    </ligand>
</feature>
<feature type="binding site" evidence="1">
    <location>
        <position position="451"/>
    </location>
    <ligand>
        <name>Mn(2+)</name>
        <dbReference type="ChEBI" id="CHEBI:29035"/>
        <label>1</label>
    </ligand>
</feature>
<accession>Q18GK9</accession>
<keyword id="KW-0324">Glycolysis</keyword>
<keyword id="KW-0413">Isomerase</keyword>
<keyword id="KW-0464">Manganese</keyword>
<keyword id="KW-0479">Metal-binding</keyword>
<keyword id="KW-1185">Reference proteome</keyword>
<protein>
    <recommendedName>
        <fullName evidence="1">2,3-bisphosphoglycerate-independent phosphoglycerate mutase</fullName>
        <shortName evidence="1">BPG-independent PGAM</shortName>
        <shortName evidence="1">Phosphoglyceromutase</shortName>
        <shortName evidence="1">iPGM</shortName>
        <ecNumber evidence="1">5.4.2.12</ecNumber>
    </recommendedName>
</protein>
<evidence type="ECO:0000255" key="1">
    <source>
        <dbReference type="HAMAP-Rule" id="MF_01038"/>
    </source>
</evidence>
<organism>
    <name type="scientific">Haloquadratum walsbyi (strain DSM 16790 / HBSQ001)</name>
    <dbReference type="NCBI Taxonomy" id="362976"/>
    <lineage>
        <taxon>Archaea</taxon>
        <taxon>Methanobacteriati</taxon>
        <taxon>Methanobacteriota</taxon>
        <taxon>Stenosarchaea group</taxon>
        <taxon>Halobacteria</taxon>
        <taxon>Halobacteriales</taxon>
        <taxon>Haloferacaceae</taxon>
        <taxon>Haloquadratum</taxon>
    </lineage>
</organism>
<dbReference type="EC" id="5.4.2.12" evidence="1"/>
<dbReference type="EMBL" id="AM180088">
    <property type="protein sequence ID" value="CAJ52888.1"/>
    <property type="molecule type" value="Genomic_DNA"/>
</dbReference>
<dbReference type="RefSeq" id="WP_011572002.1">
    <property type="nucleotide sequence ID" value="NC_008212.1"/>
</dbReference>
<dbReference type="SMR" id="Q18GK9"/>
<dbReference type="STRING" id="362976.HQ_2781A"/>
<dbReference type="GeneID" id="4194056"/>
<dbReference type="KEGG" id="hwa:HQ_2781A"/>
<dbReference type="eggNOG" id="arCOG03068">
    <property type="taxonomic scope" value="Archaea"/>
</dbReference>
<dbReference type="HOGENOM" id="CLU_026099_2_0_2"/>
<dbReference type="UniPathway" id="UPA00109">
    <property type="reaction ID" value="UER00186"/>
</dbReference>
<dbReference type="Proteomes" id="UP000001975">
    <property type="component" value="Chromosome"/>
</dbReference>
<dbReference type="GO" id="GO:0005737">
    <property type="term" value="C:cytoplasm"/>
    <property type="evidence" value="ECO:0007669"/>
    <property type="project" value="InterPro"/>
</dbReference>
<dbReference type="GO" id="GO:0030145">
    <property type="term" value="F:manganese ion binding"/>
    <property type="evidence" value="ECO:0007669"/>
    <property type="project" value="UniProtKB-UniRule"/>
</dbReference>
<dbReference type="GO" id="GO:0004619">
    <property type="term" value="F:phosphoglycerate mutase activity"/>
    <property type="evidence" value="ECO:0007669"/>
    <property type="project" value="UniProtKB-EC"/>
</dbReference>
<dbReference type="GO" id="GO:0006007">
    <property type="term" value="P:glucose catabolic process"/>
    <property type="evidence" value="ECO:0007669"/>
    <property type="project" value="InterPro"/>
</dbReference>
<dbReference type="GO" id="GO:0006096">
    <property type="term" value="P:glycolytic process"/>
    <property type="evidence" value="ECO:0007669"/>
    <property type="project" value="UniProtKB-UniRule"/>
</dbReference>
<dbReference type="CDD" id="cd16010">
    <property type="entry name" value="iPGM"/>
    <property type="match status" value="1"/>
</dbReference>
<dbReference type="FunFam" id="3.40.1450.10:FF:000002">
    <property type="entry name" value="2,3-bisphosphoglycerate-independent phosphoglycerate mutase"/>
    <property type="match status" value="1"/>
</dbReference>
<dbReference type="Gene3D" id="3.40.720.10">
    <property type="entry name" value="Alkaline Phosphatase, subunit A"/>
    <property type="match status" value="1"/>
</dbReference>
<dbReference type="Gene3D" id="3.40.1450.10">
    <property type="entry name" value="BPG-independent phosphoglycerate mutase, domain B"/>
    <property type="match status" value="1"/>
</dbReference>
<dbReference type="HAMAP" id="MF_01038">
    <property type="entry name" value="GpmI"/>
    <property type="match status" value="1"/>
</dbReference>
<dbReference type="InterPro" id="IPR017850">
    <property type="entry name" value="Alkaline_phosphatase_core_sf"/>
</dbReference>
<dbReference type="InterPro" id="IPR011258">
    <property type="entry name" value="BPG-indep_PGM_N"/>
</dbReference>
<dbReference type="InterPro" id="IPR006124">
    <property type="entry name" value="Metalloenzyme"/>
</dbReference>
<dbReference type="InterPro" id="IPR036646">
    <property type="entry name" value="PGAM_B_sf"/>
</dbReference>
<dbReference type="InterPro" id="IPR005995">
    <property type="entry name" value="Pgm_bpd_ind"/>
</dbReference>
<dbReference type="NCBIfam" id="TIGR01307">
    <property type="entry name" value="pgm_bpd_ind"/>
    <property type="match status" value="1"/>
</dbReference>
<dbReference type="PANTHER" id="PTHR31637">
    <property type="entry name" value="2,3-BISPHOSPHOGLYCERATE-INDEPENDENT PHOSPHOGLYCERATE MUTASE"/>
    <property type="match status" value="1"/>
</dbReference>
<dbReference type="PANTHER" id="PTHR31637:SF0">
    <property type="entry name" value="2,3-BISPHOSPHOGLYCERATE-INDEPENDENT PHOSPHOGLYCERATE MUTASE"/>
    <property type="match status" value="1"/>
</dbReference>
<dbReference type="Pfam" id="PF06415">
    <property type="entry name" value="iPGM_N"/>
    <property type="match status" value="1"/>
</dbReference>
<dbReference type="Pfam" id="PF01676">
    <property type="entry name" value="Metalloenzyme"/>
    <property type="match status" value="1"/>
</dbReference>
<dbReference type="PIRSF" id="PIRSF001492">
    <property type="entry name" value="IPGAM"/>
    <property type="match status" value="1"/>
</dbReference>
<dbReference type="SUPFAM" id="SSF64158">
    <property type="entry name" value="2,3-Bisphosphoglycerate-independent phosphoglycerate mutase, substrate-binding domain"/>
    <property type="match status" value="1"/>
</dbReference>
<dbReference type="SUPFAM" id="SSF53649">
    <property type="entry name" value="Alkaline phosphatase-like"/>
    <property type="match status" value="1"/>
</dbReference>
<comment type="function">
    <text evidence="1">Catalyzes the interconversion of 2-phosphoglycerate and 3-phosphoglycerate.</text>
</comment>
<comment type="catalytic activity">
    <reaction evidence="1">
        <text>(2R)-2-phosphoglycerate = (2R)-3-phosphoglycerate</text>
        <dbReference type="Rhea" id="RHEA:15901"/>
        <dbReference type="ChEBI" id="CHEBI:58272"/>
        <dbReference type="ChEBI" id="CHEBI:58289"/>
        <dbReference type="EC" id="5.4.2.12"/>
    </reaction>
</comment>
<comment type="cofactor">
    <cofactor evidence="1">
        <name>Mn(2+)</name>
        <dbReference type="ChEBI" id="CHEBI:29035"/>
    </cofactor>
    <text evidence="1">Binds 2 manganese ions per subunit.</text>
</comment>
<comment type="pathway">
    <text evidence="1">Carbohydrate degradation; glycolysis; pyruvate from D-glyceraldehyde 3-phosphate: step 3/5.</text>
</comment>
<comment type="similarity">
    <text evidence="1">Belongs to the BPG-independent phosphoglycerate mutase family.</text>
</comment>
<gene>
    <name evidence="1" type="primary">gpmI</name>
    <name type="ordered locus">HQ_2781A</name>
</gene>
<reference key="1">
    <citation type="journal article" date="2006" name="BMC Genomics">
        <title>The genome of the square archaeon Haloquadratum walsbyi: life at the limits of water activity.</title>
        <authorList>
            <person name="Bolhuis H."/>
            <person name="Palm P."/>
            <person name="Wende A."/>
            <person name="Falb M."/>
            <person name="Rampp M."/>
            <person name="Rodriguez-Valera F."/>
            <person name="Pfeiffer F."/>
            <person name="Oesterhelt D."/>
        </authorList>
    </citation>
    <scope>NUCLEOTIDE SEQUENCE [LARGE SCALE GENOMIC DNA]</scope>
    <source>
        <strain>DSM 16790 / HBSQ001</strain>
    </source>
</reference>